<name>ACBD6_HUMAN</name>
<keyword id="KW-0002">3D-structure</keyword>
<keyword id="KW-0040">ANK repeat</keyword>
<keyword id="KW-1268">Autism spectrum disorder</keyword>
<keyword id="KW-0963">Cytoplasm</keyword>
<keyword id="KW-0225">Disease variant</keyword>
<keyword id="KW-1023">Dystonia</keyword>
<keyword id="KW-0991">Intellectual disability</keyword>
<keyword id="KW-0446">Lipid-binding</keyword>
<keyword id="KW-0539">Nucleus</keyword>
<keyword id="KW-0908">Parkinsonism</keyword>
<keyword id="KW-0597">Phosphoprotein</keyword>
<keyword id="KW-1267">Proteomics identification</keyword>
<keyword id="KW-1185">Reference proteome</keyword>
<keyword id="KW-0677">Repeat</keyword>
<dbReference type="EMBL" id="AL445469">
    <property type="status" value="NOT_ANNOTATED_CDS"/>
    <property type="molecule type" value="Genomic_DNA"/>
</dbReference>
<dbReference type="EMBL" id="AL139141">
    <property type="status" value="NOT_ANNOTATED_CDS"/>
    <property type="molecule type" value="Genomic_DNA"/>
</dbReference>
<dbReference type="EMBL" id="AL358354">
    <property type="status" value="NOT_ANNOTATED_CDS"/>
    <property type="molecule type" value="Genomic_DNA"/>
</dbReference>
<dbReference type="EMBL" id="BC006505">
    <property type="protein sequence ID" value="AAH06505.1"/>
    <property type="molecule type" value="mRNA"/>
</dbReference>
<dbReference type="CCDS" id="CCDS1339.1"/>
<dbReference type="RefSeq" id="NP_115736.1">
    <property type="nucleotide sequence ID" value="NM_032360.4"/>
</dbReference>
<dbReference type="RefSeq" id="XP_047288036.1">
    <property type="nucleotide sequence ID" value="XM_047432080.1"/>
</dbReference>
<dbReference type="RefSeq" id="XP_047288037.1">
    <property type="nucleotide sequence ID" value="XM_047432081.1"/>
</dbReference>
<dbReference type="RefSeq" id="XP_047288038.1">
    <property type="nucleotide sequence ID" value="XM_047432082.1"/>
</dbReference>
<dbReference type="RefSeq" id="XP_047288039.1">
    <property type="nucleotide sequence ID" value="XM_047432083.1"/>
</dbReference>
<dbReference type="RefSeq" id="XP_047288040.1">
    <property type="nucleotide sequence ID" value="XM_047432084.1"/>
</dbReference>
<dbReference type="RefSeq" id="XP_047288041.1">
    <property type="nucleotide sequence ID" value="XM_047432085.1"/>
</dbReference>
<dbReference type="RefSeq" id="XP_054195160.1">
    <property type="nucleotide sequence ID" value="XM_054339185.1"/>
</dbReference>
<dbReference type="RefSeq" id="XP_054195161.1">
    <property type="nucleotide sequence ID" value="XM_054339186.1"/>
</dbReference>
<dbReference type="RefSeq" id="XP_054195162.1">
    <property type="nucleotide sequence ID" value="XM_054339187.1"/>
</dbReference>
<dbReference type="RefSeq" id="XP_054195163.1">
    <property type="nucleotide sequence ID" value="XM_054339188.1"/>
</dbReference>
<dbReference type="RefSeq" id="XP_054195164.1">
    <property type="nucleotide sequence ID" value="XM_054339189.1"/>
</dbReference>
<dbReference type="RefSeq" id="XP_054195165.1">
    <property type="nucleotide sequence ID" value="XM_054339190.1"/>
</dbReference>
<dbReference type="PDB" id="2COP">
    <property type="method" value="NMR"/>
    <property type="chains" value="A=42-137"/>
</dbReference>
<dbReference type="PDBsum" id="2COP"/>
<dbReference type="SMR" id="Q9BR61"/>
<dbReference type="BioGRID" id="124046">
    <property type="interactions" value="19"/>
</dbReference>
<dbReference type="FunCoup" id="Q9BR61">
    <property type="interactions" value="1398"/>
</dbReference>
<dbReference type="IntAct" id="Q9BR61">
    <property type="interactions" value="19"/>
</dbReference>
<dbReference type="STRING" id="9606.ENSP00000495710"/>
<dbReference type="iPTMnet" id="Q9BR61"/>
<dbReference type="MetOSite" id="Q9BR61"/>
<dbReference type="PhosphoSitePlus" id="Q9BR61"/>
<dbReference type="BioMuta" id="ACBD6"/>
<dbReference type="DMDM" id="74762703"/>
<dbReference type="jPOST" id="Q9BR61"/>
<dbReference type="MassIVE" id="Q9BR61"/>
<dbReference type="PaxDb" id="9606-ENSP00000356567"/>
<dbReference type="PeptideAtlas" id="Q9BR61"/>
<dbReference type="ProteomicsDB" id="78745"/>
<dbReference type="Pumba" id="Q9BR61"/>
<dbReference type="Antibodypedia" id="72484">
    <property type="antibodies" value="198 antibodies from 28 providers"/>
</dbReference>
<dbReference type="DNASU" id="84320"/>
<dbReference type="Ensembl" id="ENST00000367595.4">
    <property type="protein sequence ID" value="ENSP00000356567.3"/>
    <property type="gene ID" value="ENSG00000230124.8"/>
</dbReference>
<dbReference type="Ensembl" id="ENST00000642319.1">
    <property type="protein sequence ID" value="ENSP00000495710.1"/>
    <property type="gene ID" value="ENSG00000230124.8"/>
</dbReference>
<dbReference type="GeneID" id="84320"/>
<dbReference type="KEGG" id="hsa:84320"/>
<dbReference type="MANE-Select" id="ENST00000367595.4">
    <property type="protein sequence ID" value="ENSP00000356567.3"/>
    <property type="RefSeq nucleotide sequence ID" value="NM_032360.4"/>
    <property type="RefSeq protein sequence ID" value="NP_115736.1"/>
</dbReference>
<dbReference type="UCSC" id="uc001gog.4">
    <property type="organism name" value="human"/>
</dbReference>
<dbReference type="AGR" id="HGNC:23339"/>
<dbReference type="CTD" id="84320"/>
<dbReference type="DisGeNET" id="84320"/>
<dbReference type="GeneCards" id="ACBD6"/>
<dbReference type="HGNC" id="HGNC:23339">
    <property type="gene designation" value="ACBD6"/>
</dbReference>
<dbReference type="HPA" id="ENSG00000230124">
    <property type="expression patterns" value="Low tissue specificity"/>
</dbReference>
<dbReference type="MalaCards" id="ACBD6"/>
<dbReference type="MIM" id="616352">
    <property type="type" value="gene"/>
</dbReference>
<dbReference type="MIM" id="620785">
    <property type="type" value="phenotype"/>
</dbReference>
<dbReference type="neXtProt" id="NX_Q9BR61"/>
<dbReference type="OpenTargets" id="ENSG00000230124"/>
<dbReference type="PharmGKB" id="PA134925459"/>
<dbReference type="VEuPathDB" id="HostDB:ENSG00000230124"/>
<dbReference type="eggNOG" id="KOG0817">
    <property type="taxonomic scope" value="Eukaryota"/>
</dbReference>
<dbReference type="GeneTree" id="ENSGT00940000157458"/>
<dbReference type="HOGENOM" id="CLU_050309_1_0_1"/>
<dbReference type="InParanoid" id="Q9BR61"/>
<dbReference type="OMA" id="ARSKWQA"/>
<dbReference type="OrthoDB" id="10254927at2759"/>
<dbReference type="PAN-GO" id="Q9BR61">
    <property type="GO annotations" value="1 GO annotation based on evolutionary models"/>
</dbReference>
<dbReference type="PhylomeDB" id="Q9BR61"/>
<dbReference type="TreeFam" id="TF329102"/>
<dbReference type="PathwayCommons" id="Q9BR61"/>
<dbReference type="Reactome" id="R-HSA-77289">
    <property type="pathway name" value="Mitochondrial Fatty Acid Beta-Oxidation"/>
</dbReference>
<dbReference type="SignaLink" id="Q9BR61"/>
<dbReference type="BioGRID-ORCS" id="84320">
    <property type="hits" value="15 hits in 1158 CRISPR screens"/>
</dbReference>
<dbReference type="ChiTaRS" id="ACBD6">
    <property type="organism name" value="human"/>
</dbReference>
<dbReference type="EvolutionaryTrace" id="Q9BR61"/>
<dbReference type="GenomeRNAi" id="84320"/>
<dbReference type="Pharos" id="Q9BR61">
    <property type="development level" value="Tbio"/>
</dbReference>
<dbReference type="PRO" id="PR:Q9BR61"/>
<dbReference type="Proteomes" id="UP000005640">
    <property type="component" value="Chromosome 1"/>
</dbReference>
<dbReference type="RNAct" id="Q9BR61">
    <property type="molecule type" value="protein"/>
</dbReference>
<dbReference type="Bgee" id="ENSG00000230124">
    <property type="expression patterns" value="Expressed in cortical plate and 162 other cell types or tissues"/>
</dbReference>
<dbReference type="ExpressionAtlas" id="Q9BR61">
    <property type="expression patterns" value="baseline and differential"/>
</dbReference>
<dbReference type="GO" id="GO:0005737">
    <property type="term" value="C:cytoplasm"/>
    <property type="evidence" value="ECO:0000314"/>
    <property type="project" value="UniProtKB"/>
</dbReference>
<dbReference type="GO" id="GO:0005829">
    <property type="term" value="C:cytosol"/>
    <property type="evidence" value="ECO:0000304"/>
    <property type="project" value="Reactome"/>
</dbReference>
<dbReference type="GO" id="GO:0005634">
    <property type="term" value="C:nucleus"/>
    <property type="evidence" value="ECO:0000314"/>
    <property type="project" value="UniProtKB"/>
</dbReference>
<dbReference type="GO" id="GO:0000062">
    <property type="term" value="F:fatty-acyl-CoA binding"/>
    <property type="evidence" value="ECO:0000315"/>
    <property type="project" value="UniProtKB"/>
</dbReference>
<dbReference type="GO" id="GO:0008289">
    <property type="term" value="F:lipid binding"/>
    <property type="evidence" value="ECO:0000315"/>
    <property type="project" value="UniProtKB"/>
</dbReference>
<dbReference type="FunFam" id="1.20.80.10:FF:000022">
    <property type="entry name" value="acyl-CoA-binding domain-containing protein 6 isoform X1"/>
    <property type="match status" value="1"/>
</dbReference>
<dbReference type="FunFam" id="1.25.40.20:FF:000252">
    <property type="entry name" value="acyl-CoA-binding domain-containing protein 6 isoform X2"/>
    <property type="match status" value="1"/>
</dbReference>
<dbReference type="Gene3D" id="1.20.80.10">
    <property type="match status" value="1"/>
</dbReference>
<dbReference type="Gene3D" id="1.25.40.20">
    <property type="entry name" value="Ankyrin repeat-containing domain"/>
    <property type="match status" value="2"/>
</dbReference>
<dbReference type="InterPro" id="IPR000582">
    <property type="entry name" value="Acyl-CoA-binding_protein"/>
</dbReference>
<dbReference type="InterPro" id="IPR035984">
    <property type="entry name" value="Acyl-CoA-binding_sf"/>
</dbReference>
<dbReference type="InterPro" id="IPR002110">
    <property type="entry name" value="Ankyrin_rpt"/>
</dbReference>
<dbReference type="InterPro" id="IPR036770">
    <property type="entry name" value="Ankyrin_rpt-contain_sf"/>
</dbReference>
<dbReference type="InterPro" id="IPR014352">
    <property type="entry name" value="FERM/acyl-CoA-bd_prot_sf"/>
</dbReference>
<dbReference type="PANTHER" id="PTHR24119">
    <property type="entry name" value="ACYL-COA-BINDING DOMAIN-CONTAINING PROTEIN 6"/>
    <property type="match status" value="1"/>
</dbReference>
<dbReference type="PANTHER" id="PTHR24119:SF0">
    <property type="entry name" value="ACYL-COA-BINDING DOMAIN-CONTAINING PROTEIN 6"/>
    <property type="match status" value="1"/>
</dbReference>
<dbReference type="Pfam" id="PF00887">
    <property type="entry name" value="ACBP"/>
    <property type="match status" value="1"/>
</dbReference>
<dbReference type="Pfam" id="PF12796">
    <property type="entry name" value="Ank_2"/>
    <property type="match status" value="1"/>
</dbReference>
<dbReference type="PRINTS" id="PR00689">
    <property type="entry name" value="ACOABINDINGP"/>
</dbReference>
<dbReference type="PRINTS" id="PR01415">
    <property type="entry name" value="ANKYRIN"/>
</dbReference>
<dbReference type="SMART" id="SM00248">
    <property type="entry name" value="ANK"/>
    <property type="match status" value="2"/>
</dbReference>
<dbReference type="SUPFAM" id="SSF47027">
    <property type="entry name" value="Acyl-CoA binding protein"/>
    <property type="match status" value="1"/>
</dbReference>
<dbReference type="SUPFAM" id="SSF48403">
    <property type="entry name" value="Ankyrin repeat"/>
    <property type="match status" value="1"/>
</dbReference>
<dbReference type="PROSITE" id="PS51228">
    <property type="entry name" value="ACB_2"/>
    <property type="match status" value="1"/>
</dbReference>
<dbReference type="PROSITE" id="PS50297">
    <property type="entry name" value="ANK_REP_REGION"/>
    <property type="match status" value="1"/>
</dbReference>
<dbReference type="PROSITE" id="PS50088">
    <property type="entry name" value="ANK_REPEAT"/>
    <property type="match status" value="2"/>
</dbReference>
<accession>Q9BR61</accession>
<evidence type="ECO:0000250" key="1"/>
<evidence type="ECO:0000255" key="2">
    <source>
        <dbReference type="PROSITE-ProRule" id="PRU00573"/>
    </source>
</evidence>
<evidence type="ECO:0000256" key="3">
    <source>
        <dbReference type="SAM" id="MobiDB-lite"/>
    </source>
</evidence>
<evidence type="ECO:0000269" key="4">
    <source>
    </source>
</evidence>
<evidence type="ECO:0000269" key="5">
    <source>
    </source>
</evidence>
<evidence type="ECO:0000269" key="6">
    <source>
    </source>
</evidence>
<evidence type="ECO:0007744" key="7">
    <source>
    </source>
</evidence>
<evidence type="ECO:0007829" key="8">
    <source>
        <dbReference type="PDB" id="2COP"/>
    </source>
</evidence>
<sequence length="282" mass="31151">MASSFLPAGAITGDSGGELSSGDDSGEVEFPHSPEIEETSCLAELFEKAAAHLQGLIQVASREQLLYLYARYKQVKVGNCNTPKPSFFDFEGKQKWEAWKALGDSSPSQAMQEYIAVVKKLDPGWNPQIPEKKGKEANTGFGGPVISSLYHEETIREEDKNIFDYCRENNIDHITKAIKSKNVDVNVKDEEGRALLHWACDRGHKELVTVLLQHRADINCQDNEGQTALHYASACEFLDIVELLLQSGADPTLRDQDGCLPEEVTGCKTVSLVLQRHTTGKA</sequence>
<feature type="chain" id="PRO_0000232879" description="Acyl-CoA-binding domain-containing protein 6">
    <location>
        <begin position="1"/>
        <end position="282"/>
    </location>
</feature>
<feature type="domain" description="ACB" evidence="2">
    <location>
        <begin position="42"/>
        <end position="127"/>
    </location>
</feature>
<feature type="repeat" description="ANK 1">
    <location>
        <begin position="191"/>
        <end position="220"/>
    </location>
</feature>
<feature type="repeat" description="ANK 2">
    <location>
        <begin position="224"/>
        <end position="253"/>
    </location>
</feature>
<feature type="region of interest" description="Disordered" evidence="3">
    <location>
        <begin position="1"/>
        <end position="31"/>
    </location>
</feature>
<feature type="binding site" evidence="1">
    <location>
        <begin position="69"/>
        <end position="73"/>
    </location>
    <ligand>
        <name>an acyl-CoA</name>
        <dbReference type="ChEBI" id="CHEBI:58342"/>
    </ligand>
</feature>
<feature type="binding site" evidence="1">
    <location>
        <position position="95"/>
    </location>
    <ligand>
        <name>an acyl-CoA</name>
        <dbReference type="ChEBI" id="CHEBI:58342"/>
    </ligand>
</feature>
<feature type="binding site" evidence="1">
    <location>
        <position position="114"/>
    </location>
    <ligand>
        <name>an acyl-CoA</name>
        <dbReference type="ChEBI" id="CHEBI:58342"/>
    </ligand>
</feature>
<feature type="modified residue" description="Phosphoserine" evidence="7">
    <location>
        <position position="106"/>
    </location>
</feature>
<feature type="sequence variant" id="VAR_089637" description="In NEDPM; pathogenic." evidence="6">
    <location>
        <begin position="54"/>
        <end position="282"/>
    </location>
</feature>
<feature type="sequence variant" id="VAR_089638" description="In NEDPM; pathogenic." evidence="6">
    <location>
        <begin position="63"/>
        <end position="282"/>
    </location>
</feature>
<feature type="sequence variant" id="VAR_089639" description="In NEDPM; pathogenic." evidence="6">
    <location>
        <begin position="72"/>
        <end position="282"/>
    </location>
</feature>
<feature type="sequence variant" id="VAR_089640" description="In NEDPM; pathogenic." evidence="6">
    <location>
        <begin position="73"/>
        <end position="282"/>
    </location>
</feature>
<feature type="sequence variant" id="VAR_089641" description="In NEDPM; pathogenic." evidence="6">
    <location>
        <begin position="94"/>
        <end position="282"/>
    </location>
</feature>
<feature type="sequence variant" id="VAR_089642" description="In NEDPM; likely pathogenic." evidence="6">
    <location>
        <begin position="180"/>
        <end position="282"/>
    </location>
</feature>
<feature type="sequence variant" id="VAR_089643" description="In NEDPM; likely pathogenic." evidence="6">
    <location>
        <begin position="198"/>
        <end position="282"/>
    </location>
</feature>
<feature type="sequence variant" id="VAR_089644" description="In NEDPM; uncertain significance." evidence="6">
    <original>D</original>
    <variation>G</variation>
    <location>
        <position position="201"/>
    </location>
</feature>
<feature type="sequence variant" id="VAR_089645" description="In NEDPM; uncertain significance." evidence="6">
    <original>N</original>
    <variation>NN</variation>
    <location>
        <position position="219"/>
    </location>
</feature>
<feature type="sequence variant" id="VAR_089646" description="In NEDPM; uncertain significance." evidence="6">
    <location>
        <begin position="254"/>
        <end position="282"/>
    </location>
</feature>
<feature type="helix" evidence="8">
    <location>
        <begin position="43"/>
        <end position="53"/>
    </location>
</feature>
<feature type="turn" evidence="8">
    <location>
        <begin position="57"/>
        <end position="59"/>
    </location>
</feature>
<feature type="helix" evidence="8">
    <location>
        <begin position="62"/>
        <end position="76"/>
    </location>
</feature>
<feature type="helix" evidence="8">
    <location>
        <begin position="90"/>
        <end position="100"/>
    </location>
</feature>
<feature type="helix" evidence="8">
    <location>
        <begin position="107"/>
        <end position="121"/>
    </location>
</feature>
<comment type="function">
    <text evidence="4 6">Binds long-chain acyl-coenzyme A molecules with a strong preference for unsaturated C18:1-CoA, lower affinity for unsaturated C20:4-CoA, and very weak affinity for saturated C16:0-CoA. Does not bind fatty acids. Plays a role in protein N-myristoylation (PubMed:37951597).</text>
</comment>
<comment type="subunit">
    <text evidence="4">Monomer.</text>
</comment>
<comment type="interaction">
    <interactant intactId="EBI-2848793">
        <id>Q9BR61</id>
    </interactant>
    <interactant intactId="EBI-5280164">
        <id>P30419</id>
        <label>NMT1</label>
    </interactant>
    <organismsDiffer>false</organismsDiffer>
    <experiments>6</experiments>
</comment>
<comment type="interaction">
    <interactant intactId="EBI-2848793">
        <id>Q9BR61</id>
    </interactant>
    <interactant intactId="EBI-3920273">
        <id>O60551</id>
        <label>NMT2</label>
    </interactant>
    <organismsDiffer>false</organismsDiffer>
    <experiments>17</experiments>
</comment>
<comment type="subcellular location">
    <subcellularLocation>
        <location evidence="4 6">Cytoplasm</location>
    </subcellularLocation>
    <subcellularLocation>
        <location evidence="6">Nucleus</location>
    </subcellularLocation>
</comment>
<comment type="tissue specificity">
    <text evidence="4">Detected in placenta and spleen (at protein level). Detected in placenta, umbilical cord blood, CD34-positive hematopoietic progenitor cells and bone marrow.</text>
</comment>
<comment type="disease" evidence="5 6">
    <disease id="DI-06884">
        <name>Neurodevelopmental disorder with progressive movement abnormalities</name>
        <acronym>NEDPM</acronym>
        <description>An autosomal recessive, progressive disorder characterized by global developmental delay, intellectual disability, significant expressive language impairment, behavioral abnormalities, and movement disorders including dystonia, spasticity and cerebellar ataxia associated with gait impairment. Additional features include facial dysmorphism, oculomotor anomalies, microcephaly, seizures and brain imaging abnormalities. Parkinsonism may develop in older patients.</description>
        <dbReference type="MIM" id="620785"/>
    </disease>
    <text>The disease is caused by variants affecting the gene represented in this entry.</text>
</comment>
<protein>
    <recommendedName>
        <fullName>Acyl-CoA-binding domain-containing protein 6</fullName>
    </recommendedName>
</protein>
<gene>
    <name type="primary">ACBD6</name>
</gene>
<organism>
    <name type="scientific">Homo sapiens</name>
    <name type="common">Human</name>
    <dbReference type="NCBI Taxonomy" id="9606"/>
    <lineage>
        <taxon>Eukaryota</taxon>
        <taxon>Metazoa</taxon>
        <taxon>Chordata</taxon>
        <taxon>Craniata</taxon>
        <taxon>Vertebrata</taxon>
        <taxon>Euteleostomi</taxon>
        <taxon>Mammalia</taxon>
        <taxon>Eutheria</taxon>
        <taxon>Euarchontoglires</taxon>
        <taxon>Primates</taxon>
        <taxon>Haplorrhini</taxon>
        <taxon>Catarrhini</taxon>
        <taxon>Hominidae</taxon>
        <taxon>Homo</taxon>
    </lineage>
</organism>
<proteinExistence type="evidence at protein level"/>
<reference key="1">
    <citation type="journal article" date="2006" name="Nature">
        <title>The DNA sequence and biological annotation of human chromosome 1.</title>
        <authorList>
            <person name="Gregory S.G."/>
            <person name="Barlow K.F."/>
            <person name="McLay K.E."/>
            <person name="Kaul R."/>
            <person name="Swarbreck D."/>
            <person name="Dunham A."/>
            <person name="Scott C.E."/>
            <person name="Howe K.L."/>
            <person name="Woodfine K."/>
            <person name="Spencer C.C.A."/>
            <person name="Jones M.C."/>
            <person name="Gillson C."/>
            <person name="Searle S."/>
            <person name="Zhou Y."/>
            <person name="Kokocinski F."/>
            <person name="McDonald L."/>
            <person name="Evans R."/>
            <person name="Phillips K."/>
            <person name="Atkinson A."/>
            <person name="Cooper R."/>
            <person name="Jones C."/>
            <person name="Hall R.E."/>
            <person name="Andrews T.D."/>
            <person name="Lloyd C."/>
            <person name="Ainscough R."/>
            <person name="Almeida J.P."/>
            <person name="Ambrose K.D."/>
            <person name="Anderson F."/>
            <person name="Andrew R.W."/>
            <person name="Ashwell R.I.S."/>
            <person name="Aubin K."/>
            <person name="Babbage A.K."/>
            <person name="Bagguley C.L."/>
            <person name="Bailey J."/>
            <person name="Beasley H."/>
            <person name="Bethel G."/>
            <person name="Bird C.P."/>
            <person name="Bray-Allen S."/>
            <person name="Brown J.Y."/>
            <person name="Brown A.J."/>
            <person name="Buckley D."/>
            <person name="Burton J."/>
            <person name="Bye J."/>
            <person name="Carder C."/>
            <person name="Chapman J.C."/>
            <person name="Clark S.Y."/>
            <person name="Clarke G."/>
            <person name="Clee C."/>
            <person name="Cobley V."/>
            <person name="Collier R.E."/>
            <person name="Corby N."/>
            <person name="Coville G.J."/>
            <person name="Davies J."/>
            <person name="Deadman R."/>
            <person name="Dunn M."/>
            <person name="Earthrowl M."/>
            <person name="Ellington A.G."/>
            <person name="Errington H."/>
            <person name="Frankish A."/>
            <person name="Frankland J."/>
            <person name="French L."/>
            <person name="Garner P."/>
            <person name="Garnett J."/>
            <person name="Gay L."/>
            <person name="Ghori M.R.J."/>
            <person name="Gibson R."/>
            <person name="Gilby L.M."/>
            <person name="Gillett W."/>
            <person name="Glithero R.J."/>
            <person name="Grafham D.V."/>
            <person name="Griffiths C."/>
            <person name="Griffiths-Jones S."/>
            <person name="Grocock R."/>
            <person name="Hammond S."/>
            <person name="Harrison E.S.I."/>
            <person name="Hart E."/>
            <person name="Haugen E."/>
            <person name="Heath P.D."/>
            <person name="Holmes S."/>
            <person name="Holt K."/>
            <person name="Howden P.J."/>
            <person name="Hunt A.R."/>
            <person name="Hunt S.E."/>
            <person name="Hunter G."/>
            <person name="Isherwood J."/>
            <person name="James R."/>
            <person name="Johnson C."/>
            <person name="Johnson D."/>
            <person name="Joy A."/>
            <person name="Kay M."/>
            <person name="Kershaw J.K."/>
            <person name="Kibukawa M."/>
            <person name="Kimberley A.M."/>
            <person name="King A."/>
            <person name="Knights A.J."/>
            <person name="Lad H."/>
            <person name="Laird G."/>
            <person name="Lawlor S."/>
            <person name="Leongamornlert D.A."/>
            <person name="Lloyd D.M."/>
            <person name="Loveland J."/>
            <person name="Lovell J."/>
            <person name="Lush M.J."/>
            <person name="Lyne R."/>
            <person name="Martin S."/>
            <person name="Mashreghi-Mohammadi M."/>
            <person name="Matthews L."/>
            <person name="Matthews N.S.W."/>
            <person name="McLaren S."/>
            <person name="Milne S."/>
            <person name="Mistry S."/>
            <person name="Moore M.J.F."/>
            <person name="Nickerson T."/>
            <person name="O'Dell C.N."/>
            <person name="Oliver K."/>
            <person name="Palmeiri A."/>
            <person name="Palmer S.A."/>
            <person name="Parker A."/>
            <person name="Patel D."/>
            <person name="Pearce A.V."/>
            <person name="Peck A.I."/>
            <person name="Pelan S."/>
            <person name="Phelps K."/>
            <person name="Phillimore B.J."/>
            <person name="Plumb R."/>
            <person name="Rajan J."/>
            <person name="Raymond C."/>
            <person name="Rouse G."/>
            <person name="Saenphimmachak C."/>
            <person name="Sehra H.K."/>
            <person name="Sheridan E."/>
            <person name="Shownkeen R."/>
            <person name="Sims S."/>
            <person name="Skuce C.D."/>
            <person name="Smith M."/>
            <person name="Steward C."/>
            <person name="Subramanian S."/>
            <person name="Sycamore N."/>
            <person name="Tracey A."/>
            <person name="Tromans A."/>
            <person name="Van Helmond Z."/>
            <person name="Wall M."/>
            <person name="Wallis J.M."/>
            <person name="White S."/>
            <person name="Whitehead S.L."/>
            <person name="Wilkinson J.E."/>
            <person name="Willey D.L."/>
            <person name="Williams H."/>
            <person name="Wilming L."/>
            <person name="Wray P.W."/>
            <person name="Wu Z."/>
            <person name="Coulson A."/>
            <person name="Vaudin M."/>
            <person name="Sulston J.E."/>
            <person name="Durbin R.M."/>
            <person name="Hubbard T."/>
            <person name="Wooster R."/>
            <person name="Dunham I."/>
            <person name="Carter N.P."/>
            <person name="McVean G."/>
            <person name="Ross M.T."/>
            <person name="Harrow J."/>
            <person name="Olson M.V."/>
            <person name="Beck S."/>
            <person name="Rogers J."/>
            <person name="Bentley D.R."/>
        </authorList>
    </citation>
    <scope>NUCLEOTIDE SEQUENCE [LARGE SCALE GENOMIC DNA]</scope>
</reference>
<reference key="2">
    <citation type="journal article" date="2004" name="Genome Res.">
        <title>The status, quality, and expansion of the NIH full-length cDNA project: the Mammalian Gene Collection (MGC).</title>
        <authorList>
            <consortium name="The MGC Project Team"/>
        </authorList>
    </citation>
    <scope>NUCLEOTIDE SEQUENCE [LARGE SCALE MRNA]</scope>
    <source>
        <tissue>Lung</tissue>
    </source>
</reference>
<reference key="3">
    <citation type="journal article" date="2008" name="J. Lipid Res.">
        <title>Characterization of an acyl-coenzyme A binding protein predominantly expressed in human primitive progenitor cells.</title>
        <authorList>
            <person name="Soupene E."/>
            <person name="Serikov V."/>
            <person name="Kuypers F.A."/>
        </authorList>
    </citation>
    <scope>FUNCTION</scope>
    <scope>SUBUNIT</scope>
    <scope>SUBCELLULAR LOCATION</scope>
    <scope>TISSUE SPECIFICITY</scope>
</reference>
<reference key="4">
    <citation type="journal article" date="2008" name="Proc. Natl. Acad. Sci. U.S.A.">
        <title>A quantitative atlas of mitotic phosphorylation.</title>
        <authorList>
            <person name="Dephoure N."/>
            <person name="Zhou C."/>
            <person name="Villen J."/>
            <person name="Beausoleil S.A."/>
            <person name="Bakalarski C.E."/>
            <person name="Elledge S.J."/>
            <person name="Gygi S.P."/>
        </authorList>
    </citation>
    <scope>IDENTIFICATION BY MASS SPECTROMETRY [LARGE SCALE ANALYSIS]</scope>
    <source>
        <tissue>Cervix carcinoma</tissue>
    </source>
</reference>
<reference key="5">
    <citation type="journal article" date="2010" name="Sci. Signal.">
        <title>Quantitative phosphoproteomics reveals widespread full phosphorylation site occupancy during mitosis.</title>
        <authorList>
            <person name="Olsen J.V."/>
            <person name="Vermeulen M."/>
            <person name="Santamaria A."/>
            <person name="Kumar C."/>
            <person name="Miller M.L."/>
            <person name="Jensen L.J."/>
            <person name="Gnad F."/>
            <person name="Cox J."/>
            <person name="Jensen T.S."/>
            <person name="Nigg E.A."/>
            <person name="Brunak S."/>
            <person name="Mann M."/>
        </authorList>
    </citation>
    <scope>PHOSPHORYLATION [LARGE SCALE ANALYSIS] AT SER-106</scope>
    <scope>IDENTIFICATION BY MASS SPECTROMETRY [LARGE SCALE ANALYSIS]</scope>
    <source>
        <tissue>Cervix carcinoma</tissue>
    </source>
</reference>
<reference key="6">
    <citation type="journal article" date="2011" name="BMC Syst. Biol.">
        <title>Initial characterization of the human central proteome.</title>
        <authorList>
            <person name="Burkard T.R."/>
            <person name="Planyavsky M."/>
            <person name="Kaupe I."/>
            <person name="Breitwieser F.P."/>
            <person name="Buerckstuemmer T."/>
            <person name="Bennett K.L."/>
            <person name="Superti-Furga G."/>
            <person name="Colinge J."/>
        </authorList>
    </citation>
    <scope>IDENTIFICATION BY MASS SPECTROMETRY [LARGE SCALE ANALYSIS]</scope>
</reference>
<reference key="7">
    <citation type="journal article" date="2013" name="J. Proteome Res.">
        <title>Toward a comprehensive characterization of a human cancer cell phosphoproteome.</title>
        <authorList>
            <person name="Zhou H."/>
            <person name="Di Palma S."/>
            <person name="Preisinger C."/>
            <person name="Peng M."/>
            <person name="Polat A.N."/>
            <person name="Heck A.J."/>
            <person name="Mohammed S."/>
        </authorList>
    </citation>
    <scope>IDENTIFICATION BY MASS SPECTROMETRY [LARGE SCALE ANALYSIS]</scope>
    <source>
        <tissue>Cervix carcinoma</tissue>
        <tissue>Erythroleukemia</tissue>
    </source>
</reference>
<reference key="8">
    <citation type="journal article" date="2023" name="Neurol. Genet.">
        <title>Neurodevelopmental Disorder, Obesity, Pancytopenia, Diabetes Mellitus, Cirrhosis, and Renal Failure in ACBD6-Associated Syndrome: A Case Report.</title>
        <authorList>
            <person name="Yeetong P."/>
            <person name="Tanpowpong N."/>
            <person name="Rakwongkhachon S."/>
            <person name="Suphapeetiporn K."/>
            <person name="Shotelersuk V."/>
        </authorList>
    </citation>
    <scope>INVOLVEMENT IN NEDPM</scope>
</reference>
<reference key="9">
    <citation type="submission" date="2005-11" db="PDB data bank">
        <title>Solution structure of RSGI RUH-040, an ACBP domain from human cDNA.</title>
        <authorList>
            <consortium name="RIKEN structural genomics initiative (RSGI)"/>
        </authorList>
    </citation>
    <scope>STRUCTURE BY NMR OF 42-137</scope>
</reference>
<reference key="10">
    <citation type="journal article" date="2024" name="Brain">
        <title>Bi-allelic ACBD6 variants lead to a neurodevelopmental syndrome with progressive and complex movement disorders.</title>
        <authorList>
            <person name="Kaiyrzhanov R."/>
            <person name="Rad A."/>
            <person name="Lin S.J."/>
            <person name="Bertoli-Avella A."/>
            <person name="Kallemeijn W.W."/>
            <person name="Godwin A."/>
            <person name="Zaki M.S."/>
            <person name="Huang K."/>
            <person name="Lau T."/>
            <person name="Petree C."/>
            <person name="Efthymiou S."/>
            <person name="Karimiani E.G."/>
            <person name="Hempel M."/>
            <person name="Normand E.A."/>
            <person name="Rudnik-Schoeneborn S."/>
            <person name="Schatz U.A."/>
            <person name="Baggelaar M.P."/>
            <person name="Ilyas M."/>
            <person name="Sultan T."/>
            <person name="Alvi J.R."/>
            <person name="Ganieva M."/>
            <person name="Fowler B."/>
            <person name="Aanicai R."/>
            <person name="Tayfun G.A."/>
            <person name="Al Saman A."/>
            <person name="Alswaid A."/>
            <person name="Amiri N."/>
            <person name="Asilova N."/>
            <person name="Shotelersuk V."/>
            <person name="Yeetong P."/>
            <person name="Azam M."/>
            <person name="Babaei M."/>
            <person name="Monajemi G.B."/>
            <person name="Mohammadi P."/>
            <person name="Samie S."/>
            <person name="Banu S.H."/>
            <person name="Pinto Basto J."/>
            <person name="Kortuem F."/>
            <person name="Bauer M."/>
            <person name="Bauer P."/>
            <person name="Beetz C."/>
            <person name="Garshasbi M."/>
            <person name="Issa A.H."/>
            <person name="Eyaid W."/>
            <person name="Ahmed H."/>
            <person name="Hashemi N."/>
            <person name="Hassanpour K."/>
            <person name="Herman I."/>
            <person name="Ibrohimov S."/>
            <person name="Abdul-Majeed B.A."/>
            <person name="Imdad M."/>
            <person name="Isrofilov M."/>
            <person name="Kaiyal Q."/>
            <person name="Khan S."/>
            <person name="Kirmse B."/>
            <person name="Koster J."/>
            <person name="Lourenco C.M."/>
            <person name="Mitani T."/>
            <person name="Moldovan O."/>
            <person name="Murphy D."/>
            <person name="Najafi M."/>
            <person name="Pehlivan D."/>
            <person name="Rocha M.E."/>
            <person name="Salpietro V."/>
            <person name="Schmidts M."/>
            <person name="Shalata A."/>
            <person name="Mahroum M."/>
            <person name="Talbeya J.K."/>
            <person name="Taylor R.W."/>
            <person name="Vazquez D."/>
            <person name="Vetro A."/>
            <person name="Waterham H.R."/>
            <person name="Zaman M."/>
            <person name="Schrader T.A."/>
            <person name="Chung W.K."/>
            <person name="Guerrini R."/>
            <person name="Lupski J.R."/>
            <person name="Gleeson J."/>
            <person name="Suri M."/>
            <person name="Jamshidi Y."/>
            <person name="Bhatia K.P."/>
            <person name="Vona B."/>
            <person name="Schrader M."/>
            <person name="Severino M."/>
            <person name="Guille M."/>
            <person name="Tate E.W."/>
            <person name="Varshney G.K."/>
            <person name="Houlden H."/>
            <person name="Maroofian R."/>
        </authorList>
    </citation>
    <scope>VARIANTS NEDPM 54-GLN--ALA-282 DEL; 63-GLU--ALA-282 DEL; 72-TYR--ALA-282 DEL; 73-LYS--ALA-282 DEL; 94-GLN--ALA-282 DEL; 180-SER--ALA-282 DEL; 198-TRP--ALA-282 DEL; GLY-201; ASN-219 INS AND 254-ARG--ALA-282 DEL</scope>
    <scope>INVOLVEMENT IN NEDPM</scope>
    <scope>SUBCELLULAR LOCATION</scope>
    <scope>FUNCTION</scope>
</reference>